<protein>
    <recommendedName>
        <fullName evidence="1">dCTP deaminase</fullName>
        <ecNumber evidence="1">3.5.4.13</ecNumber>
    </recommendedName>
    <alternativeName>
        <fullName evidence="1">Deoxycytidine triphosphate deaminase</fullName>
    </alternativeName>
</protein>
<accession>A3NSM2</accession>
<dbReference type="EC" id="3.5.4.13" evidence="1"/>
<dbReference type="EMBL" id="CP000572">
    <property type="protein sequence ID" value="ABN88933.1"/>
    <property type="molecule type" value="Genomic_DNA"/>
</dbReference>
<dbReference type="RefSeq" id="WP_004192666.1">
    <property type="nucleotide sequence ID" value="NC_009076.1"/>
</dbReference>
<dbReference type="SMR" id="A3NSM2"/>
<dbReference type="GeneID" id="93059502"/>
<dbReference type="KEGG" id="bpl:BURPS1106A_1063"/>
<dbReference type="HOGENOM" id="CLU_087476_4_0_4"/>
<dbReference type="UniPathway" id="UPA00610">
    <property type="reaction ID" value="UER00665"/>
</dbReference>
<dbReference type="Proteomes" id="UP000006738">
    <property type="component" value="Chromosome I"/>
</dbReference>
<dbReference type="GO" id="GO:0008829">
    <property type="term" value="F:dCTP deaminase activity"/>
    <property type="evidence" value="ECO:0007669"/>
    <property type="project" value="UniProtKB-UniRule"/>
</dbReference>
<dbReference type="GO" id="GO:0000166">
    <property type="term" value="F:nucleotide binding"/>
    <property type="evidence" value="ECO:0007669"/>
    <property type="project" value="UniProtKB-KW"/>
</dbReference>
<dbReference type="GO" id="GO:0006226">
    <property type="term" value="P:dUMP biosynthetic process"/>
    <property type="evidence" value="ECO:0007669"/>
    <property type="project" value="UniProtKB-UniPathway"/>
</dbReference>
<dbReference type="GO" id="GO:0006229">
    <property type="term" value="P:dUTP biosynthetic process"/>
    <property type="evidence" value="ECO:0007669"/>
    <property type="project" value="UniProtKB-UniRule"/>
</dbReference>
<dbReference type="GO" id="GO:0015949">
    <property type="term" value="P:nucleobase-containing small molecule interconversion"/>
    <property type="evidence" value="ECO:0007669"/>
    <property type="project" value="TreeGrafter"/>
</dbReference>
<dbReference type="CDD" id="cd07557">
    <property type="entry name" value="trimeric_dUTPase"/>
    <property type="match status" value="1"/>
</dbReference>
<dbReference type="FunFam" id="2.70.40.10:FF:000001">
    <property type="entry name" value="dCTP deaminase"/>
    <property type="match status" value="1"/>
</dbReference>
<dbReference type="Gene3D" id="2.70.40.10">
    <property type="match status" value="1"/>
</dbReference>
<dbReference type="HAMAP" id="MF_00146">
    <property type="entry name" value="dCTP_deaminase"/>
    <property type="match status" value="1"/>
</dbReference>
<dbReference type="InterPro" id="IPR011962">
    <property type="entry name" value="dCTP_deaminase"/>
</dbReference>
<dbReference type="InterPro" id="IPR036157">
    <property type="entry name" value="dUTPase-like_sf"/>
</dbReference>
<dbReference type="InterPro" id="IPR033704">
    <property type="entry name" value="dUTPase_trimeric"/>
</dbReference>
<dbReference type="NCBIfam" id="TIGR02274">
    <property type="entry name" value="dCTP_deam"/>
    <property type="match status" value="1"/>
</dbReference>
<dbReference type="PANTHER" id="PTHR42680">
    <property type="entry name" value="DCTP DEAMINASE"/>
    <property type="match status" value="1"/>
</dbReference>
<dbReference type="PANTHER" id="PTHR42680:SF3">
    <property type="entry name" value="DCTP DEAMINASE"/>
    <property type="match status" value="1"/>
</dbReference>
<dbReference type="Pfam" id="PF22769">
    <property type="entry name" value="DCD"/>
    <property type="match status" value="1"/>
</dbReference>
<dbReference type="SUPFAM" id="SSF51283">
    <property type="entry name" value="dUTPase-like"/>
    <property type="match status" value="1"/>
</dbReference>
<comment type="function">
    <text evidence="1">Catalyzes the deamination of dCTP to dUTP.</text>
</comment>
<comment type="catalytic activity">
    <reaction evidence="1">
        <text>dCTP + H2O + H(+) = dUTP + NH4(+)</text>
        <dbReference type="Rhea" id="RHEA:22680"/>
        <dbReference type="ChEBI" id="CHEBI:15377"/>
        <dbReference type="ChEBI" id="CHEBI:15378"/>
        <dbReference type="ChEBI" id="CHEBI:28938"/>
        <dbReference type="ChEBI" id="CHEBI:61481"/>
        <dbReference type="ChEBI" id="CHEBI:61555"/>
        <dbReference type="EC" id="3.5.4.13"/>
    </reaction>
</comment>
<comment type="pathway">
    <text evidence="1">Pyrimidine metabolism; dUMP biosynthesis; dUMP from dCTP (dUTP route): step 1/2.</text>
</comment>
<comment type="subunit">
    <text evidence="1">Homotrimer.</text>
</comment>
<comment type="similarity">
    <text evidence="1">Belongs to the dCTP deaminase family.</text>
</comment>
<gene>
    <name evidence="1" type="primary">dcd</name>
    <name type="ordered locus">BURPS1106A_1063</name>
</gene>
<evidence type="ECO:0000255" key="1">
    <source>
        <dbReference type="HAMAP-Rule" id="MF_00146"/>
    </source>
</evidence>
<feature type="chain" id="PRO_1000009691" description="dCTP deaminase">
    <location>
        <begin position="1"/>
        <end position="189"/>
    </location>
</feature>
<feature type="active site" description="Proton donor/acceptor" evidence="1">
    <location>
        <position position="138"/>
    </location>
</feature>
<feature type="binding site" evidence="1">
    <location>
        <begin position="112"/>
        <end position="117"/>
    </location>
    <ligand>
        <name>dCTP</name>
        <dbReference type="ChEBI" id="CHEBI:61481"/>
    </ligand>
</feature>
<feature type="binding site" evidence="1">
    <location>
        <begin position="136"/>
        <end position="138"/>
    </location>
    <ligand>
        <name>dCTP</name>
        <dbReference type="ChEBI" id="CHEBI:61481"/>
    </ligand>
</feature>
<feature type="binding site" evidence="1">
    <location>
        <position position="157"/>
    </location>
    <ligand>
        <name>dCTP</name>
        <dbReference type="ChEBI" id="CHEBI:61481"/>
    </ligand>
</feature>
<feature type="binding site" evidence="1">
    <location>
        <position position="171"/>
    </location>
    <ligand>
        <name>dCTP</name>
        <dbReference type="ChEBI" id="CHEBI:61481"/>
    </ligand>
</feature>
<feature type="binding site" evidence="1">
    <location>
        <position position="181"/>
    </location>
    <ligand>
        <name>dCTP</name>
        <dbReference type="ChEBI" id="CHEBI:61481"/>
    </ligand>
</feature>
<sequence length="189" mass="21312">MSIKSDKWIRRMAEEHKMIEPFVPDQVRAAEDGRKIVSYGTSSYGYDIRCADEFKIFTNINSTIVDPKNFDEGSFVDFKGDVCIIPPNSFALARTVEYFRIPRTVLTVCLGKSTYARCGIIVNVTPFEPEWEGYVTLEFSNTTPLPAKIYANEGVAQVLFFESDEVCDVSYADRGGKYQGQRGVTLPKT</sequence>
<keyword id="KW-0378">Hydrolase</keyword>
<keyword id="KW-0546">Nucleotide metabolism</keyword>
<keyword id="KW-0547">Nucleotide-binding</keyword>
<name>DCD_BURP0</name>
<proteinExistence type="inferred from homology"/>
<organism>
    <name type="scientific">Burkholderia pseudomallei (strain 1106a)</name>
    <dbReference type="NCBI Taxonomy" id="357348"/>
    <lineage>
        <taxon>Bacteria</taxon>
        <taxon>Pseudomonadati</taxon>
        <taxon>Pseudomonadota</taxon>
        <taxon>Betaproteobacteria</taxon>
        <taxon>Burkholderiales</taxon>
        <taxon>Burkholderiaceae</taxon>
        <taxon>Burkholderia</taxon>
        <taxon>pseudomallei group</taxon>
    </lineage>
</organism>
<reference key="1">
    <citation type="journal article" date="2010" name="Genome Biol. Evol.">
        <title>Continuing evolution of Burkholderia mallei through genome reduction and large-scale rearrangements.</title>
        <authorList>
            <person name="Losada L."/>
            <person name="Ronning C.M."/>
            <person name="DeShazer D."/>
            <person name="Woods D."/>
            <person name="Fedorova N."/>
            <person name="Kim H.S."/>
            <person name="Shabalina S.A."/>
            <person name="Pearson T.R."/>
            <person name="Brinkac L."/>
            <person name="Tan P."/>
            <person name="Nandi T."/>
            <person name="Crabtree J."/>
            <person name="Badger J."/>
            <person name="Beckstrom-Sternberg S."/>
            <person name="Saqib M."/>
            <person name="Schutzer S.E."/>
            <person name="Keim P."/>
            <person name="Nierman W.C."/>
        </authorList>
    </citation>
    <scope>NUCLEOTIDE SEQUENCE [LARGE SCALE GENOMIC DNA]</scope>
    <source>
        <strain>1106a</strain>
    </source>
</reference>